<keyword id="KW-1185">Reference proteome</keyword>
<keyword id="KW-0732">Signal</keyword>
<proteinExistence type="inferred from homology"/>
<evidence type="ECO:0000255" key="1"/>
<accession>O66984</accession>
<dbReference type="EMBL" id="AE000657">
    <property type="protein sequence ID" value="AAC06953.1"/>
    <property type="molecule type" value="Genomic_DNA"/>
</dbReference>
<dbReference type="PIR" id="E70369">
    <property type="entry name" value="E70369"/>
</dbReference>
<dbReference type="RefSeq" id="NP_213545.1">
    <property type="nucleotide sequence ID" value="NC_000918.1"/>
</dbReference>
<dbReference type="RefSeq" id="WP_010880483.1">
    <property type="nucleotide sequence ID" value="NC_000918.1"/>
</dbReference>
<dbReference type="STRING" id="224324.aq_796"/>
<dbReference type="EnsemblBacteria" id="AAC06953">
    <property type="protein sequence ID" value="AAC06953"/>
    <property type="gene ID" value="aq_796"/>
</dbReference>
<dbReference type="KEGG" id="aae:aq_796"/>
<dbReference type="HOGENOM" id="CLU_2014175_0_0_0"/>
<dbReference type="InParanoid" id="O66984"/>
<dbReference type="OrthoDB" id="14806at2"/>
<dbReference type="Proteomes" id="UP000000798">
    <property type="component" value="Chromosome"/>
</dbReference>
<feature type="signal peptide" evidence="1">
    <location>
        <begin position="1"/>
        <end position="18"/>
    </location>
</feature>
<feature type="chain" id="PRO_0000013619" description="Uncharacterized protein aq_796">
    <location>
        <begin position="19"/>
        <end position="132"/>
    </location>
</feature>
<reference key="1">
    <citation type="journal article" date="1998" name="Nature">
        <title>The complete genome of the hyperthermophilic bacterium Aquifex aeolicus.</title>
        <authorList>
            <person name="Deckert G."/>
            <person name="Warren P.V."/>
            <person name="Gaasterland T."/>
            <person name="Young W.G."/>
            <person name="Lenox A.L."/>
            <person name="Graham D.E."/>
            <person name="Overbeek R."/>
            <person name="Snead M.A."/>
            <person name="Keller M."/>
            <person name="Aujay M."/>
            <person name="Huber R."/>
            <person name="Feldman R.A."/>
            <person name="Short J.M."/>
            <person name="Olsen G.J."/>
            <person name="Swanson R.V."/>
        </authorList>
    </citation>
    <scope>NUCLEOTIDE SEQUENCE [LARGE SCALE GENOMIC DNA]</scope>
    <source>
        <strain>VF5</strain>
    </source>
</reference>
<name>Y796_AQUAE</name>
<sequence length="132" mass="14666">MRKIISMLFIPLFIFAMAEPAGAPPEVKNIKILVLDRAGKKHELKSPLCEGLSYLKVKHGGIEYSVSLTSLEEIEVLSVSGDVAKIKLKYKNGKEEIFDISANTLCTGTSDFGNASFYLKDVQKILFRRGEK</sequence>
<protein>
    <recommendedName>
        <fullName>Uncharacterized protein aq_796</fullName>
    </recommendedName>
</protein>
<gene>
    <name type="ordered locus">aq_796</name>
</gene>
<organism>
    <name type="scientific">Aquifex aeolicus (strain VF5)</name>
    <dbReference type="NCBI Taxonomy" id="224324"/>
    <lineage>
        <taxon>Bacteria</taxon>
        <taxon>Pseudomonadati</taxon>
        <taxon>Aquificota</taxon>
        <taxon>Aquificia</taxon>
        <taxon>Aquificales</taxon>
        <taxon>Aquificaceae</taxon>
        <taxon>Aquifex</taxon>
    </lineage>
</organism>